<gene>
    <name evidence="1" type="primary">rpmC</name>
    <name type="ordered locus">NMC0140</name>
</gene>
<keyword id="KW-0687">Ribonucleoprotein</keyword>
<keyword id="KW-0689">Ribosomal protein</keyword>
<accession>A1KRI1</accession>
<feature type="chain" id="PRO_1000007539" description="Large ribosomal subunit protein uL29">
    <location>
        <begin position="1"/>
        <end position="63"/>
    </location>
</feature>
<organism>
    <name type="scientific">Neisseria meningitidis serogroup C / serotype 2a (strain ATCC 700532 / DSM 15464 / FAM18)</name>
    <dbReference type="NCBI Taxonomy" id="272831"/>
    <lineage>
        <taxon>Bacteria</taxon>
        <taxon>Pseudomonadati</taxon>
        <taxon>Pseudomonadota</taxon>
        <taxon>Betaproteobacteria</taxon>
        <taxon>Neisseriales</taxon>
        <taxon>Neisseriaceae</taxon>
        <taxon>Neisseria</taxon>
    </lineage>
</organism>
<dbReference type="EMBL" id="AM421808">
    <property type="protein sequence ID" value="CAM09459.1"/>
    <property type="molecule type" value="Genomic_DNA"/>
</dbReference>
<dbReference type="RefSeq" id="WP_002215432.1">
    <property type="nucleotide sequence ID" value="NC_008767.1"/>
</dbReference>
<dbReference type="SMR" id="A1KRI1"/>
<dbReference type="GeneID" id="93387225"/>
<dbReference type="KEGG" id="nmc:NMC0140"/>
<dbReference type="HOGENOM" id="CLU_158491_1_2_4"/>
<dbReference type="Proteomes" id="UP000002286">
    <property type="component" value="Chromosome"/>
</dbReference>
<dbReference type="GO" id="GO:0022625">
    <property type="term" value="C:cytosolic large ribosomal subunit"/>
    <property type="evidence" value="ECO:0007669"/>
    <property type="project" value="TreeGrafter"/>
</dbReference>
<dbReference type="GO" id="GO:0003735">
    <property type="term" value="F:structural constituent of ribosome"/>
    <property type="evidence" value="ECO:0007669"/>
    <property type="project" value="InterPro"/>
</dbReference>
<dbReference type="GO" id="GO:0006412">
    <property type="term" value="P:translation"/>
    <property type="evidence" value="ECO:0007669"/>
    <property type="project" value="UniProtKB-UniRule"/>
</dbReference>
<dbReference type="CDD" id="cd00427">
    <property type="entry name" value="Ribosomal_L29_HIP"/>
    <property type="match status" value="1"/>
</dbReference>
<dbReference type="FunFam" id="1.10.287.310:FF:000001">
    <property type="entry name" value="50S ribosomal protein L29"/>
    <property type="match status" value="1"/>
</dbReference>
<dbReference type="Gene3D" id="1.10.287.310">
    <property type="match status" value="1"/>
</dbReference>
<dbReference type="HAMAP" id="MF_00374">
    <property type="entry name" value="Ribosomal_uL29"/>
    <property type="match status" value="1"/>
</dbReference>
<dbReference type="InterPro" id="IPR050063">
    <property type="entry name" value="Ribosomal_protein_uL29"/>
</dbReference>
<dbReference type="InterPro" id="IPR001854">
    <property type="entry name" value="Ribosomal_uL29"/>
</dbReference>
<dbReference type="InterPro" id="IPR018254">
    <property type="entry name" value="Ribosomal_uL29_CS"/>
</dbReference>
<dbReference type="InterPro" id="IPR036049">
    <property type="entry name" value="Ribosomal_uL29_sf"/>
</dbReference>
<dbReference type="NCBIfam" id="TIGR00012">
    <property type="entry name" value="L29"/>
    <property type="match status" value="1"/>
</dbReference>
<dbReference type="PANTHER" id="PTHR10916">
    <property type="entry name" value="60S RIBOSOMAL PROTEIN L35/50S RIBOSOMAL PROTEIN L29"/>
    <property type="match status" value="1"/>
</dbReference>
<dbReference type="PANTHER" id="PTHR10916:SF0">
    <property type="entry name" value="LARGE RIBOSOMAL SUBUNIT PROTEIN UL29C"/>
    <property type="match status" value="1"/>
</dbReference>
<dbReference type="Pfam" id="PF00831">
    <property type="entry name" value="Ribosomal_L29"/>
    <property type="match status" value="1"/>
</dbReference>
<dbReference type="SUPFAM" id="SSF46561">
    <property type="entry name" value="Ribosomal protein L29 (L29p)"/>
    <property type="match status" value="1"/>
</dbReference>
<dbReference type="PROSITE" id="PS00579">
    <property type="entry name" value="RIBOSOMAL_L29"/>
    <property type="match status" value="1"/>
</dbReference>
<comment type="similarity">
    <text evidence="1">Belongs to the universal ribosomal protein uL29 family.</text>
</comment>
<sequence length="63" mass="7078">MKANELKDKSVEQLNADLLDLLKAQFGLRMQNATGQLGKPSELKRVRRDIARIKTVLTEKGAK</sequence>
<proteinExistence type="inferred from homology"/>
<evidence type="ECO:0000255" key="1">
    <source>
        <dbReference type="HAMAP-Rule" id="MF_00374"/>
    </source>
</evidence>
<evidence type="ECO:0000305" key="2"/>
<name>RL29_NEIMF</name>
<protein>
    <recommendedName>
        <fullName evidence="1">Large ribosomal subunit protein uL29</fullName>
    </recommendedName>
    <alternativeName>
        <fullName evidence="2">50S ribosomal protein L29</fullName>
    </alternativeName>
</protein>
<reference key="1">
    <citation type="journal article" date="2007" name="PLoS Genet.">
        <title>Meningococcal genetic variation mechanisms viewed through comparative analysis of serogroup C strain FAM18.</title>
        <authorList>
            <person name="Bentley S.D."/>
            <person name="Vernikos G.S."/>
            <person name="Snyder L.A.S."/>
            <person name="Churcher C."/>
            <person name="Arrowsmith C."/>
            <person name="Chillingworth T."/>
            <person name="Cronin A."/>
            <person name="Davis P.H."/>
            <person name="Holroyd N.E."/>
            <person name="Jagels K."/>
            <person name="Maddison M."/>
            <person name="Moule S."/>
            <person name="Rabbinowitsch E."/>
            <person name="Sharp S."/>
            <person name="Unwin L."/>
            <person name="Whitehead S."/>
            <person name="Quail M.A."/>
            <person name="Achtman M."/>
            <person name="Barrell B.G."/>
            <person name="Saunders N.J."/>
            <person name="Parkhill J."/>
        </authorList>
    </citation>
    <scope>NUCLEOTIDE SEQUENCE [LARGE SCALE GENOMIC DNA]</scope>
    <source>
        <strain>ATCC 700532 / DSM 15464 / FAM18</strain>
    </source>
</reference>